<gene>
    <name type="primary">rnf2-a</name>
    <name type="synonym">ring1b-a</name>
</gene>
<protein>
    <recommendedName>
        <fullName>E3 ubiquitin-protein ligase RING2-A</fullName>
        <ecNumber evidence="1">2.3.2.27</ecNumber>
    </recommendedName>
    <alternativeName>
        <fullName>RING finger protein 1B-A</fullName>
        <shortName>RING1b-A</shortName>
    </alternativeName>
    <alternativeName>
        <fullName>RING finger protein 2-A</fullName>
    </alternativeName>
    <alternativeName>
        <fullName evidence="5">RING-type E3 ubiquitin transferase RING2-A</fullName>
    </alternativeName>
</protein>
<accession>Q66J69</accession>
<name>RNG2A_XENLA</name>
<feature type="chain" id="PRO_0000056042" description="E3 ubiquitin-protein ligase RING2-A">
    <location>
        <begin position="1"/>
        <end position="344"/>
    </location>
</feature>
<feature type="zinc finger region" description="RING-type" evidence="3">
    <location>
        <begin position="48"/>
        <end position="88"/>
    </location>
</feature>
<feature type="region of interest" description="Interaction with HIP2" evidence="1">
    <location>
        <begin position="2"/>
        <end position="181"/>
    </location>
</feature>
<feature type="region of interest" description="Interaction with nucleosomes via an acidic patch on histone H2A and histone H2B" evidence="1">
    <location>
        <begin position="90"/>
        <end position="95"/>
    </location>
</feature>
<feature type="region of interest" description="Disordered" evidence="4">
    <location>
        <begin position="148"/>
        <end position="230"/>
    </location>
</feature>
<feature type="compositionally biased region" description="Polar residues" evidence="4">
    <location>
        <begin position="180"/>
        <end position="192"/>
    </location>
</feature>
<organism>
    <name type="scientific">Xenopus laevis</name>
    <name type="common">African clawed frog</name>
    <dbReference type="NCBI Taxonomy" id="8355"/>
    <lineage>
        <taxon>Eukaryota</taxon>
        <taxon>Metazoa</taxon>
        <taxon>Chordata</taxon>
        <taxon>Craniata</taxon>
        <taxon>Vertebrata</taxon>
        <taxon>Euteleostomi</taxon>
        <taxon>Amphibia</taxon>
        <taxon>Batrachia</taxon>
        <taxon>Anura</taxon>
        <taxon>Pipoidea</taxon>
        <taxon>Pipidae</taxon>
        <taxon>Xenopodinae</taxon>
        <taxon>Xenopus</taxon>
        <taxon>Xenopus</taxon>
    </lineage>
</organism>
<dbReference type="EC" id="2.3.2.27" evidence="1"/>
<dbReference type="EMBL" id="BC081039">
    <property type="protein sequence ID" value="AAH81039.1"/>
    <property type="molecule type" value="mRNA"/>
</dbReference>
<dbReference type="SMR" id="Q66J69"/>
<dbReference type="DNASU" id="447471"/>
<dbReference type="GeneID" id="447471"/>
<dbReference type="KEGG" id="xla:447471"/>
<dbReference type="AGR" id="Xenbase:XB-GENE-6253865"/>
<dbReference type="CTD" id="447471"/>
<dbReference type="Xenbase" id="XB-GENE-6253865">
    <property type="gene designation" value="ring1.S"/>
</dbReference>
<dbReference type="OrthoDB" id="337575at2759"/>
<dbReference type="UniPathway" id="UPA00143"/>
<dbReference type="Proteomes" id="UP000186698">
    <property type="component" value="Chromosome 8S"/>
</dbReference>
<dbReference type="Bgee" id="447471">
    <property type="expression patterns" value="Expressed in testis and 19 other cell types or tissues"/>
</dbReference>
<dbReference type="GO" id="GO:0005694">
    <property type="term" value="C:chromosome"/>
    <property type="evidence" value="ECO:0007669"/>
    <property type="project" value="UniProtKB-SubCell"/>
</dbReference>
<dbReference type="GO" id="GO:0005737">
    <property type="term" value="C:cytoplasm"/>
    <property type="evidence" value="ECO:0000250"/>
    <property type="project" value="UniProtKB"/>
</dbReference>
<dbReference type="GO" id="GO:0071339">
    <property type="term" value="C:MLL1 complex"/>
    <property type="evidence" value="ECO:0000250"/>
    <property type="project" value="UniProtKB"/>
</dbReference>
<dbReference type="GO" id="GO:0005634">
    <property type="term" value="C:nucleus"/>
    <property type="evidence" value="ECO:0000250"/>
    <property type="project" value="UniProtKB"/>
</dbReference>
<dbReference type="GO" id="GO:0031519">
    <property type="term" value="C:PcG protein complex"/>
    <property type="evidence" value="ECO:0000250"/>
    <property type="project" value="UniProtKB"/>
</dbReference>
<dbReference type="GO" id="GO:0035102">
    <property type="term" value="C:PRC1 complex"/>
    <property type="evidence" value="ECO:0000250"/>
    <property type="project" value="UniProtKB"/>
</dbReference>
<dbReference type="GO" id="GO:0000151">
    <property type="term" value="C:ubiquitin ligase complex"/>
    <property type="evidence" value="ECO:0000318"/>
    <property type="project" value="GO_Central"/>
</dbReference>
<dbReference type="GO" id="GO:0003682">
    <property type="term" value="F:chromatin binding"/>
    <property type="evidence" value="ECO:0000318"/>
    <property type="project" value="GO_Central"/>
</dbReference>
<dbReference type="GO" id="GO:0140862">
    <property type="term" value="F:histone H2AK119 ubiquitin ligase activity"/>
    <property type="evidence" value="ECO:0000250"/>
    <property type="project" value="UniProtKB"/>
</dbReference>
<dbReference type="GO" id="GO:0061630">
    <property type="term" value="F:ubiquitin protein ligase activity"/>
    <property type="evidence" value="ECO:0000250"/>
    <property type="project" value="UniProtKB"/>
</dbReference>
<dbReference type="GO" id="GO:0008270">
    <property type="term" value="F:zinc ion binding"/>
    <property type="evidence" value="ECO:0007669"/>
    <property type="project" value="UniProtKB-KW"/>
</dbReference>
<dbReference type="GO" id="GO:0040029">
    <property type="term" value="P:epigenetic regulation of gene expression"/>
    <property type="evidence" value="ECO:0000250"/>
    <property type="project" value="UniProtKB"/>
</dbReference>
<dbReference type="GO" id="GO:0045892">
    <property type="term" value="P:negative regulation of DNA-templated transcription"/>
    <property type="evidence" value="ECO:0000318"/>
    <property type="project" value="GO_Central"/>
</dbReference>
<dbReference type="GO" id="GO:0000122">
    <property type="term" value="P:negative regulation of transcription by RNA polymerase II"/>
    <property type="evidence" value="ECO:0000250"/>
    <property type="project" value="UniProtKB"/>
</dbReference>
<dbReference type="GO" id="GO:0016567">
    <property type="term" value="P:protein ubiquitination"/>
    <property type="evidence" value="ECO:0007669"/>
    <property type="project" value="UniProtKB-UniPathway"/>
</dbReference>
<dbReference type="CDD" id="cd16740">
    <property type="entry name" value="RING-HC_RING2"/>
    <property type="match status" value="1"/>
</dbReference>
<dbReference type="FunFam" id="3.10.20.90:FF:000162">
    <property type="entry name" value="E3 ubiquitin-protein ligase RING1"/>
    <property type="match status" value="1"/>
</dbReference>
<dbReference type="FunFam" id="3.30.40.10:FF:000265">
    <property type="entry name" value="E3 ubiquitin-protein ligase RING1"/>
    <property type="match status" value="1"/>
</dbReference>
<dbReference type="Gene3D" id="3.10.20.90">
    <property type="entry name" value="Phosphatidylinositol 3-kinase Catalytic Subunit, Chain A, domain 1"/>
    <property type="match status" value="1"/>
</dbReference>
<dbReference type="Gene3D" id="3.30.40.10">
    <property type="entry name" value="Zinc/RING finger domain, C3HC4 (zinc finger)"/>
    <property type="match status" value="1"/>
</dbReference>
<dbReference type="InterPro" id="IPR032443">
    <property type="entry name" value="RAWUL"/>
</dbReference>
<dbReference type="InterPro" id="IPR043540">
    <property type="entry name" value="RING1/RING2"/>
</dbReference>
<dbReference type="InterPro" id="IPR001841">
    <property type="entry name" value="Znf_RING"/>
</dbReference>
<dbReference type="InterPro" id="IPR013083">
    <property type="entry name" value="Znf_RING/FYVE/PHD"/>
</dbReference>
<dbReference type="InterPro" id="IPR017907">
    <property type="entry name" value="Znf_RING_CS"/>
</dbReference>
<dbReference type="PANTHER" id="PTHR46076:SF2">
    <property type="entry name" value="E3 UBIQUITIN-PROTEIN LIGASE RING1"/>
    <property type="match status" value="1"/>
</dbReference>
<dbReference type="PANTHER" id="PTHR46076">
    <property type="entry name" value="E3 UBIQUITIN-PROTEIN LIGASE RING1 / RING 2 FAMILY MEMBER"/>
    <property type="match status" value="1"/>
</dbReference>
<dbReference type="Pfam" id="PF16207">
    <property type="entry name" value="RAWUL"/>
    <property type="match status" value="1"/>
</dbReference>
<dbReference type="Pfam" id="PF13923">
    <property type="entry name" value="zf-C3HC4_2"/>
    <property type="match status" value="1"/>
</dbReference>
<dbReference type="SMART" id="SM00184">
    <property type="entry name" value="RING"/>
    <property type="match status" value="1"/>
</dbReference>
<dbReference type="SUPFAM" id="SSF57850">
    <property type="entry name" value="RING/U-box"/>
    <property type="match status" value="1"/>
</dbReference>
<dbReference type="PROSITE" id="PS00518">
    <property type="entry name" value="ZF_RING_1"/>
    <property type="match status" value="1"/>
</dbReference>
<dbReference type="PROSITE" id="PS50089">
    <property type="entry name" value="ZF_RING_2"/>
    <property type="match status" value="1"/>
</dbReference>
<keyword id="KW-0158">Chromosome</keyword>
<keyword id="KW-0963">Cytoplasm</keyword>
<keyword id="KW-0479">Metal-binding</keyword>
<keyword id="KW-0539">Nucleus</keyword>
<keyword id="KW-1185">Reference proteome</keyword>
<keyword id="KW-0678">Repressor</keyword>
<keyword id="KW-0804">Transcription</keyword>
<keyword id="KW-0805">Transcription regulation</keyword>
<keyword id="KW-0808">Transferase</keyword>
<keyword id="KW-0833">Ubl conjugation pathway</keyword>
<keyword id="KW-0862">Zinc</keyword>
<keyword id="KW-0863">Zinc-finger</keyword>
<sequence>MATPVNAQCSSKTWELSLYELHRTPQEAIMDGTEIAVSPRSLHSELMCPICLDMLKNTMTTKECLHRFCSDCIVTALRSGNKECPTCRKKLVSKRSLRPDPNFDALISKIYPSRDEYEAHQDRVLAKLNRLHNQQALSSSIEEGLKMQAMHRAQRVRKHQHESDNTTFSGGEDNCDSRSHVSNPSVHSNQEAGPSRKRSRASEDSGAEPDLSHEGGVRSPDPPGGGETGSEIELVFRAHPLLVEKDGYSQTRYVKTTANATVDHLSKYLALRIALEEEVLRGEAEGVTLGEVSEKQYTIYICTGVAGGQYTTLNGSLTLELVNEKYWKVSKPLELYYAPTKEQK</sequence>
<comment type="function">
    <text evidence="1 2">E3 ubiquitin-protein ligase that mediates monoubiquitination of 'Lys-119' of histone H2A (H2AK119Ub), thereby playing a central role in histone code and gene regulation. H2AK119Ub gives a specific tag for epigenetic transcriptional repression. Essential component of a Polycomb group (PcG) multiprotein PRC1-like complex, a complex class required to maintain the transcriptionally repressive state of many genes, including Hox genes, throughout development. PcG PRC1 complex acts via chromatin remodeling and modification of histones, rendering chromatin heritably changed in its expressibility.</text>
</comment>
<comment type="catalytic activity">
    <reaction evidence="1">
        <text>S-ubiquitinyl-[E2 ubiquitin-conjugating enzyme]-L-cysteine + [acceptor protein]-L-lysine = [E2 ubiquitin-conjugating enzyme]-L-cysteine + N(6)-ubiquitinyl-[acceptor protein]-L-lysine.</text>
        <dbReference type="EC" id="2.3.2.27"/>
    </reaction>
</comment>
<comment type="pathway">
    <text evidence="1">Protein modification; protein ubiquitination.</text>
</comment>
<comment type="subunit">
    <text evidence="1 2">Component of chromatin-associated Polycomb (PcG) complexes. Component of a PRC1-like complex. Component of some MLL1/MLL complex (By similarity).</text>
</comment>
<comment type="subcellular location">
    <subcellularLocation>
        <location evidence="2">Nucleus</location>
    </subcellularLocation>
    <subcellularLocation>
        <location evidence="2">Cytoplasm</location>
    </subcellularLocation>
    <subcellularLocation>
        <location evidence="2">Chromosome</location>
    </subcellularLocation>
</comment>
<evidence type="ECO:0000250" key="1">
    <source>
        <dbReference type="UniProtKB" id="Q99496"/>
    </source>
</evidence>
<evidence type="ECO:0000250" key="2">
    <source>
        <dbReference type="UniProtKB" id="Q9CQJ4"/>
    </source>
</evidence>
<evidence type="ECO:0000255" key="3">
    <source>
        <dbReference type="PROSITE-ProRule" id="PRU00175"/>
    </source>
</evidence>
<evidence type="ECO:0000256" key="4">
    <source>
        <dbReference type="SAM" id="MobiDB-lite"/>
    </source>
</evidence>
<evidence type="ECO:0000305" key="5"/>
<reference key="1">
    <citation type="submission" date="2004-08" db="EMBL/GenBank/DDBJ databases">
        <authorList>
            <consortium name="NIH - Xenopus Gene Collection (XGC) project"/>
        </authorList>
    </citation>
    <scope>NUCLEOTIDE SEQUENCE [LARGE SCALE MRNA]</scope>
    <source>
        <tissue>Embryo</tissue>
    </source>
</reference>
<proteinExistence type="evidence at transcript level"/>